<organism>
    <name type="scientific">Nitrosospira multiformis (strain ATCC 25196 / NCIMB 11849 / C 71)</name>
    <dbReference type="NCBI Taxonomy" id="323848"/>
    <lineage>
        <taxon>Bacteria</taxon>
        <taxon>Pseudomonadati</taxon>
        <taxon>Pseudomonadota</taxon>
        <taxon>Betaproteobacteria</taxon>
        <taxon>Nitrosomonadales</taxon>
        <taxon>Nitrosomonadaceae</taxon>
        <taxon>Nitrosospira</taxon>
    </lineage>
</organism>
<protein>
    <recommendedName>
        <fullName evidence="1">Putative pre-16S rRNA nuclease</fullName>
        <ecNumber evidence="1">3.1.-.-</ecNumber>
    </recommendedName>
</protein>
<comment type="function">
    <text evidence="1">Could be a nuclease involved in processing of the 5'-end of pre-16S rRNA.</text>
</comment>
<comment type="subcellular location">
    <subcellularLocation>
        <location evidence="1">Cytoplasm</location>
    </subcellularLocation>
</comment>
<comment type="similarity">
    <text evidence="1">Belongs to the YqgF nuclease family.</text>
</comment>
<evidence type="ECO:0000255" key="1">
    <source>
        <dbReference type="HAMAP-Rule" id="MF_00651"/>
    </source>
</evidence>
<feature type="chain" id="PRO_0000257557" description="Putative pre-16S rRNA nuclease">
    <location>
        <begin position="1"/>
        <end position="151"/>
    </location>
</feature>
<name>YQGF_NITMU</name>
<keyword id="KW-0963">Cytoplasm</keyword>
<keyword id="KW-0378">Hydrolase</keyword>
<keyword id="KW-0540">Nuclease</keyword>
<keyword id="KW-1185">Reference proteome</keyword>
<keyword id="KW-0690">Ribosome biogenesis</keyword>
<proteinExistence type="inferred from homology"/>
<gene>
    <name type="ordered locus">Nmul_A2479</name>
</gene>
<accession>Q2Y653</accession>
<reference key="1">
    <citation type="submission" date="2005-08" db="EMBL/GenBank/DDBJ databases">
        <title>Complete sequence of chromosome 1 of Nitrosospira multiformis ATCC 25196.</title>
        <authorList>
            <person name="Copeland A."/>
            <person name="Lucas S."/>
            <person name="Lapidus A."/>
            <person name="Barry K."/>
            <person name="Detter J.C."/>
            <person name="Glavina T."/>
            <person name="Hammon N."/>
            <person name="Israni S."/>
            <person name="Pitluck S."/>
            <person name="Chain P."/>
            <person name="Malfatti S."/>
            <person name="Shin M."/>
            <person name="Vergez L."/>
            <person name="Schmutz J."/>
            <person name="Larimer F."/>
            <person name="Land M."/>
            <person name="Hauser L."/>
            <person name="Kyrpides N."/>
            <person name="Lykidis A."/>
            <person name="Richardson P."/>
        </authorList>
    </citation>
    <scope>NUCLEOTIDE SEQUENCE [LARGE SCALE GENOMIC DNA]</scope>
    <source>
        <strain>ATCC 25196 / NCIMB 11849 / C 71</strain>
    </source>
</reference>
<sequence>MEEAEKASQPHAGTALAFDFGEKRIGVAIGNLELGLAHPLVTLSNKNKEECLKSIARLMDEWKPVLLVVGLPVHADGTEHELTRRSRRFAHRLQARFGIRTVLEDERYTSISASSALDEASVRGRRQKQVLDQIAAQLILQSYFDQRNATT</sequence>
<dbReference type="EC" id="3.1.-.-" evidence="1"/>
<dbReference type="EMBL" id="CP000103">
    <property type="protein sequence ID" value="ABB75768.1"/>
    <property type="molecule type" value="Genomic_DNA"/>
</dbReference>
<dbReference type="RefSeq" id="WP_011381767.1">
    <property type="nucleotide sequence ID" value="NC_007614.1"/>
</dbReference>
<dbReference type="SMR" id="Q2Y653"/>
<dbReference type="STRING" id="323848.Nmul_A2479"/>
<dbReference type="KEGG" id="nmu:Nmul_A2479"/>
<dbReference type="eggNOG" id="COG0816">
    <property type="taxonomic scope" value="Bacteria"/>
</dbReference>
<dbReference type="HOGENOM" id="CLU_098240_3_2_4"/>
<dbReference type="OrthoDB" id="9796140at2"/>
<dbReference type="Proteomes" id="UP000002718">
    <property type="component" value="Chromosome"/>
</dbReference>
<dbReference type="GO" id="GO:0005829">
    <property type="term" value="C:cytosol"/>
    <property type="evidence" value="ECO:0007669"/>
    <property type="project" value="TreeGrafter"/>
</dbReference>
<dbReference type="GO" id="GO:0004518">
    <property type="term" value="F:nuclease activity"/>
    <property type="evidence" value="ECO:0007669"/>
    <property type="project" value="UniProtKB-KW"/>
</dbReference>
<dbReference type="GO" id="GO:0000967">
    <property type="term" value="P:rRNA 5'-end processing"/>
    <property type="evidence" value="ECO:0007669"/>
    <property type="project" value="UniProtKB-UniRule"/>
</dbReference>
<dbReference type="CDD" id="cd16964">
    <property type="entry name" value="YqgF"/>
    <property type="match status" value="1"/>
</dbReference>
<dbReference type="Gene3D" id="3.30.420.140">
    <property type="entry name" value="YqgF/RNase H-like domain"/>
    <property type="match status" value="1"/>
</dbReference>
<dbReference type="HAMAP" id="MF_00651">
    <property type="entry name" value="Nuclease_YqgF"/>
    <property type="match status" value="1"/>
</dbReference>
<dbReference type="InterPro" id="IPR012337">
    <property type="entry name" value="RNaseH-like_sf"/>
</dbReference>
<dbReference type="InterPro" id="IPR005227">
    <property type="entry name" value="YqgF"/>
</dbReference>
<dbReference type="InterPro" id="IPR006641">
    <property type="entry name" value="YqgF/RNaseH-like_dom"/>
</dbReference>
<dbReference type="InterPro" id="IPR037027">
    <property type="entry name" value="YqgF/RNaseH-like_dom_sf"/>
</dbReference>
<dbReference type="NCBIfam" id="TIGR00250">
    <property type="entry name" value="RNAse_H_YqgF"/>
    <property type="match status" value="1"/>
</dbReference>
<dbReference type="PANTHER" id="PTHR33317">
    <property type="entry name" value="POLYNUCLEOTIDYL TRANSFERASE, RIBONUCLEASE H-LIKE SUPERFAMILY PROTEIN"/>
    <property type="match status" value="1"/>
</dbReference>
<dbReference type="PANTHER" id="PTHR33317:SF4">
    <property type="entry name" value="POLYNUCLEOTIDYL TRANSFERASE, RIBONUCLEASE H-LIKE SUPERFAMILY PROTEIN"/>
    <property type="match status" value="1"/>
</dbReference>
<dbReference type="Pfam" id="PF03652">
    <property type="entry name" value="RuvX"/>
    <property type="match status" value="1"/>
</dbReference>
<dbReference type="SMART" id="SM00732">
    <property type="entry name" value="YqgFc"/>
    <property type="match status" value="1"/>
</dbReference>
<dbReference type="SUPFAM" id="SSF53098">
    <property type="entry name" value="Ribonuclease H-like"/>
    <property type="match status" value="1"/>
</dbReference>